<dbReference type="EMBL" id="CP000458">
    <property type="protein sequence ID" value="ABK07736.1"/>
    <property type="molecule type" value="Genomic_DNA"/>
</dbReference>
<dbReference type="RefSeq" id="WP_011544839.1">
    <property type="nucleotide sequence ID" value="NC_008542.1"/>
</dbReference>
<dbReference type="SMR" id="A0K5F9"/>
<dbReference type="KEGG" id="bch:Bcen2424_0983"/>
<dbReference type="HOGENOM" id="CLU_067812_0_1_4"/>
<dbReference type="GO" id="GO:0000902">
    <property type="term" value="P:cell morphogenesis"/>
    <property type="evidence" value="ECO:0007669"/>
    <property type="project" value="InterPro"/>
</dbReference>
<dbReference type="GO" id="GO:0000917">
    <property type="term" value="P:division septum assembly"/>
    <property type="evidence" value="ECO:0007669"/>
    <property type="project" value="UniProtKB-KW"/>
</dbReference>
<dbReference type="GO" id="GO:0051302">
    <property type="term" value="P:regulation of cell division"/>
    <property type="evidence" value="ECO:0007669"/>
    <property type="project" value="InterPro"/>
</dbReference>
<dbReference type="GO" id="GO:1901891">
    <property type="term" value="P:regulation of cell septum assembly"/>
    <property type="evidence" value="ECO:0007669"/>
    <property type="project" value="InterPro"/>
</dbReference>
<dbReference type="Gene3D" id="2.160.20.70">
    <property type="match status" value="1"/>
</dbReference>
<dbReference type="Gene3D" id="3.30.70.260">
    <property type="match status" value="1"/>
</dbReference>
<dbReference type="HAMAP" id="MF_00267">
    <property type="entry name" value="MinC"/>
    <property type="match status" value="1"/>
</dbReference>
<dbReference type="InterPro" id="IPR016098">
    <property type="entry name" value="CAP/MinC_C"/>
</dbReference>
<dbReference type="InterPro" id="IPR013033">
    <property type="entry name" value="MinC"/>
</dbReference>
<dbReference type="InterPro" id="IPR036145">
    <property type="entry name" value="MinC_C_sf"/>
</dbReference>
<dbReference type="InterPro" id="IPR007874">
    <property type="entry name" value="MinC_N"/>
</dbReference>
<dbReference type="InterPro" id="IPR005526">
    <property type="entry name" value="Septum_form_inhib_MinC_C"/>
</dbReference>
<dbReference type="NCBIfam" id="TIGR01222">
    <property type="entry name" value="minC"/>
    <property type="match status" value="1"/>
</dbReference>
<dbReference type="PANTHER" id="PTHR34108">
    <property type="entry name" value="SEPTUM SITE-DETERMINING PROTEIN MINC"/>
    <property type="match status" value="1"/>
</dbReference>
<dbReference type="PANTHER" id="PTHR34108:SF1">
    <property type="entry name" value="SEPTUM SITE-DETERMINING PROTEIN MINC"/>
    <property type="match status" value="1"/>
</dbReference>
<dbReference type="Pfam" id="PF03775">
    <property type="entry name" value="MinC_C"/>
    <property type="match status" value="1"/>
</dbReference>
<dbReference type="Pfam" id="PF05209">
    <property type="entry name" value="MinC_N"/>
    <property type="match status" value="1"/>
</dbReference>
<dbReference type="SUPFAM" id="SSF63848">
    <property type="entry name" value="Cell-division inhibitor MinC, C-terminal domain"/>
    <property type="match status" value="1"/>
</dbReference>
<sequence>MSLKKSPFFELRSGSVDTLLFTVKTTDLDALRAELVKRFEATPEFFADDVVAIDVRRLADGERVALADIRQMLNDVRMRPVGVVALATQGWAGEAGLPLLEARDRRAPAAKPADEAEPAAVPAVETAAAPAAAAAPEQPSEPAPTLVQAGGQTLVIDRPLRSGQQIYAKGDLVVLAPVSHGAEIIAEGNIHIYAPLRGRALAGVHGNHDARIFCTCLEPELISIAGIYRTTENPLPADVLGKSVQIRLEEEKLMIEPLRLT</sequence>
<name>MINC_BURCH</name>
<accession>A0K5F9</accession>
<keyword id="KW-0131">Cell cycle</keyword>
<keyword id="KW-0132">Cell division</keyword>
<keyword id="KW-0717">Septation</keyword>
<proteinExistence type="inferred from homology"/>
<feature type="chain" id="PRO_1000047808" description="Probable septum site-determining protein MinC">
    <location>
        <begin position="1"/>
        <end position="261"/>
    </location>
</feature>
<feature type="region of interest" description="Disordered" evidence="2">
    <location>
        <begin position="106"/>
        <end position="145"/>
    </location>
</feature>
<feature type="compositionally biased region" description="Low complexity" evidence="2">
    <location>
        <begin position="118"/>
        <end position="144"/>
    </location>
</feature>
<protein>
    <recommendedName>
        <fullName evidence="1">Probable septum site-determining protein MinC</fullName>
    </recommendedName>
</protein>
<evidence type="ECO:0000255" key="1">
    <source>
        <dbReference type="HAMAP-Rule" id="MF_00267"/>
    </source>
</evidence>
<evidence type="ECO:0000256" key="2">
    <source>
        <dbReference type="SAM" id="MobiDB-lite"/>
    </source>
</evidence>
<reference key="1">
    <citation type="submission" date="2006-08" db="EMBL/GenBank/DDBJ databases">
        <title>Complete sequence of chromosome 1 of Burkholderia cenocepacia HI2424.</title>
        <authorList>
            <person name="Copeland A."/>
            <person name="Lucas S."/>
            <person name="Lapidus A."/>
            <person name="Barry K."/>
            <person name="Detter J.C."/>
            <person name="Glavina del Rio T."/>
            <person name="Hammon N."/>
            <person name="Israni S."/>
            <person name="Pitluck S."/>
            <person name="Chain P."/>
            <person name="Malfatti S."/>
            <person name="Shin M."/>
            <person name="Vergez L."/>
            <person name="Schmutz J."/>
            <person name="Larimer F."/>
            <person name="Land M."/>
            <person name="Hauser L."/>
            <person name="Kyrpides N."/>
            <person name="Kim E."/>
            <person name="LiPuma J.J."/>
            <person name="Gonzalez C.F."/>
            <person name="Konstantinidis K."/>
            <person name="Tiedje J.M."/>
            <person name="Richardson P."/>
        </authorList>
    </citation>
    <scope>NUCLEOTIDE SEQUENCE [LARGE SCALE GENOMIC DNA]</scope>
    <source>
        <strain>HI2424</strain>
    </source>
</reference>
<organism>
    <name type="scientific">Burkholderia cenocepacia (strain HI2424)</name>
    <dbReference type="NCBI Taxonomy" id="331272"/>
    <lineage>
        <taxon>Bacteria</taxon>
        <taxon>Pseudomonadati</taxon>
        <taxon>Pseudomonadota</taxon>
        <taxon>Betaproteobacteria</taxon>
        <taxon>Burkholderiales</taxon>
        <taxon>Burkholderiaceae</taxon>
        <taxon>Burkholderia</taxon>
        <taxon>Burkholderia cepacia complex</taxon>
    </lineage>
</organism>
<comment type="function">
    <text evidence="1">Cell division inhibitor that blocks the formation of polar Z ring septums. Rapidly oscillates between the poles of the cell to destabilize FtsZ filaments that have formed before they mature into polar Z rings. Prevents FtsZ polymerization.</text>
</comment>
<comment type="subunit">
    <text evidence="1">Interacts with MinD and FtsZ.</text>
</comment>
<comment type="similarity">
    <text evidence="1">Belongs to the MinC family.</text>
</comment>
<gene>
    <name evidence="1" type="primary">minC</name>
    <name type="ordered locus">Bcen2424_0983</name>
</gene>